<dbReference type="EMBL" id="AK159289">
    <property type="protein sequence ID" value="BAE34965.1"/>
    <property type="molecule type" value="mRNA"/>
</dbReference>
<dbReference type="EMBL" id="AK170191">
    <property type="protein sequence ID" value="BAE41625.1"/>
    <property type="molecule type" value="mRNA"/>
</dbReference>
<dbReference type="EMBL" id="AC078895">
    <property type="status" value="NOT_ANNOTATED_CDS"/>
    <property type="molecule type" value="Genomic_DNA"/>
</dbReference>
<dbReference type="EMBL" id="CH466521">
    <property type="protein sequence ID" value="EDK97495.1"/>
    <property type="molecule type" value="Genomic_DNA"/>
</dbReference>
<dbReference type="EMBL" id="BC037087">
    <property type="protein sequence ID" value="AAH37087.1"/>
    <property type="molecule type" value="mRNA"/>
</dbReference>
<dbReference type="CCDS" id="CCDS28014.1"/>
<dbReference type="RefSeq" id="NP_694790.1">
    <property type="nucleotide sequence ID" value="NM_153150.2"/>
</dbReference>
<dbReference type="SMR" id="Q8JZU2"/>
<dbReference type="BioGRID" id="199216">
    <property type="interactions" value="6"/>
</dbReference>
<dbReference type="FunCoup" id="Q8JZU2">
    <property type="interactions" value="1811"/>
</dbReference>
<dbReference type="IntAct" id="Q8JZU2">
    <property type="interactions" value="2"/>
</dbReference>
<dbReference type="MINT" id="Q8JZU2"/>
<dbReference type="STRING" id="10090.ENSMUSP00000003622"/>
<dbReference type="GlyGen" id="Q8JZU2">
    <property type="glycosylation" value="1 site, 1 O-linked glycan (1 site)"/>
</dbReference>
<dbReference type="iPTMnet" id="Q8JZU2"/>
<dbReference type="PhosphoSitePlus" id="Q8JZU2"/>
<dbReference type="SwissPalm" id="Q8JZU2"/>
<dbReference type="jPOST" id="Q8JZU2"/>
<dbReference type="PaxDb" id="10090-ENSMUSP00000003622"/>
<dbReference type="PeptideAtlas" id="Q8JZU2"/>
<dbReference type="ProteomicsDB" id="298046"/>
<dbReference type="Pumba" id="Q8JZU2"/>
<dbReference type="Antibodypedia" id="22859">
    <property type="antibodies" value="143 antibodies from 23 providers"/>
</dbReference>
<dbReference type="DNASU" id="13358"/>
<dbReference type="Ensembl" id="ENSMUST00000003622.16">
    <property type="protein sequence ID" value="ENSMUSP00000003622.9"/>
    <property type="gene ID" value="ENSMUSG00000003528.16"/>
</dbReference>
<dbReference type="GeneID" id="13358"/>
<dbReference type="KEGG" id="mmu:13358"/>
<dbReference type="UCSC" id="uc007ymp.2">
    <property type="organism name" value="mouse"/>
</dbReference>
<dbReference type="AGR" id="MGI:1345283"/>
<dbReference type="CTD" id="6576"/>
<dbReference type="MGI" id="MGI:1345283">
    <property type="gene designation" value="Slc25a1"/>
</dbReference>
<dbReference type="VEuPathDB" id="HostDB:ENSMUSG00000003528"/>
<dbReference type="eggNOG" id="KOG0756">
    <property type="taxonomic scope" value="Eukaryota"/>
</dbReference>
<dbReference type="GeneTree" id="ENSGT00550000074856"/>
<dbReference type="HOGENOM" id="CLU_015166_5_1_1"/>
<dbReference type="InParanoid" id="Q8JZU2"/>
<dbReference type="OMA" id="AWYAGCT"/>
<dbReference type="OrthoDB" id="44467at2759"/>
<dbReference type="PhylomeDB" id="Q8JZU2"/>
<dbReference type="TreeFam" id="TF105786"/>
<dbReference type="Reactome" id="R-MMU-428643">
    <property type="pathway name" value="Organic anion transporters"/>
</dbReference>
<dbReference type="BioGRID-ORCS" id="13358">
    <property type="hits" value="14 hits in 79 CRISPR screens"/>
</dbReference>
<dbReference type="CD-CODE" id="CE726F99">
    <property type="entry name" value="Postsynaptic density"/>
</dbReference>
<dbReference type="PRO" id="PR:Q8JZU2"/>
<dbReference type="Proteomes" id="UP000000589">
    <property type="component" value="Chromosome 16"/>
</dbReference>
<dbReference type="RNAct" id="Q8JZU2">
    <property type="molecule type" value="protein"/>
</dbReference>
<dbReference type="Bgee" id="ENSMUSG00000003528">
    <property type="expression patterns" value="Expressed in epididymal fat pad and 258 other cell types or tissues"/>
</dbReference>
<dbReference type="ExpressionAtlas" id="Q8JZU2">
    <property type="expression patterns" value="baseline and differential"/>
</dbReference>
<dbReference type="GO" id="GO:0005743">
    <property type="term" value="C:mitochondrial inner membrane"/>
    <property type="evidence" value="ECO:0007005"/>
    <property type="project" value="MGI"/>
</dbReference>
<dbReference type="GO" id="GO:0005739">
    <property type="term" value="C:mitochondrion"/>
    <property type="evidence" value="ECO:0000314"/>
    <property type="project" value="MGI"/>
</dbReference>
<dbReference type="GO" id="GO:0015297">
    <property type="term" value="F:antiporter activity"/>
    <property type="evidence" value="ECO:0007669"/>
    <property type="project" value="UniProtKB-KW"/>
</dbReference>
<dbReference type="GO" id="GO:0071913">
    <property type="term" value="F:citrate secondary active transmembrane transporter activity"/>
    <property type="evidence" value="ECO:0000250"/>
    <property type="project" value="UniProtKB"/>
</dbReference>
<dbReference type="GO" id="GO:0015142">
    <property type="term" value="F:tricarboxylic acid transmembrane transporter activity"/>
    <property type="evidence" value="ECO:0000250"/>
    <property type="project" value="UniProtKB"/>
</dbReference>
<dbReference type="GO" id="GO:0006843">
    <property type="term" value="P:mitochondrial citrate transmembrane transport"/>
    <property type="evidence" value="ECO:0000250"/>
    <property type="project" value="UniProtKB"/>
</dbReference>
<dbReference type="FunFam" id="1.50.40.10:FF:000007">
    <property type="entry name" value="Mitochondrial tricarboxylate transport protein-like"/>
    <property type="match status" value="1"/>
</dbReference>
<dbReference type="Gene3D" id="1.50.40.10">
    <property type="entry name" value="Mitochondrial carrier domain"/>
    <property type="match status" value="1"/>
</dbReference>
<dbReference type="InterPro" id="IPR002067">
    <property type="entry name" value="Mit_carrier"/>
</dbReference>
<dbReference type="InterPro" id="IPR018108">
    <property type="entry name" value="Mitochondrial_sb/sol_carrier"/>
</dbReference>
<dbReference type="InterPro" id="IPR023395">
    <property type="entry name" value="Mt_carrier_dom_sf"/>
</dbReference>
<dbReference type="InterPro" id="IPR049563">
    <property type="entry name" value="TXTP-like"/>
</dbReference>
<dbReference type="PANTHER" id="PTHR45788">
    <property type="entry name" value="SUCCINATE/FUMARATE MITOCHONDRIAL TRANSPORTER-RELATED"/>
    <property type="match status" value="1"/>
</dbReference>
<dbReference type="PANTHER" id="PTHR45788:SF4">
    <property type="entry name" value="TRICARBOXYLATE TRANSPORT PROTEIN, MITOCHONDRIAL"/>
    <property type="match status" value="1"/>
</dbReference>
<dbReference type="Pfam" id="PF00153">
    <property type="entry name" value="Mito_carr"/>
    <property type="match status" value="3"/>
</dbReference>
<dbReference type="PRINTS" id="PR00926">
    <property type="entry name" value="MITOCARRIER"/>
</dbReference>
<dbReference type="SUPFAM" id="SSF103506">
    <property type="entry name" value="Mitochondrial carrier"/>
    <property type="match status" value="1"/>
</dbReference>
<dbReference type="PROSITE" id="PS50920">
    <property type="entry name" value="SOLCAR"/>
    <property type="match status" value="3"/>
</dbReference>
<reference evidence="11" key="1">
    <citation type="journal article" date="2005" name="Science">
        <title>The transcriptional landscape of the mammalian genome.</title>
        <authorList>
            <person name="Carninci P."/>
            <person name="Kasukawa T."/>
            <person name="Katayama S."/>
            <person name="Gough J."/>
            <person name="Frith M.C."/>
            <person name="Maeda N."/>
            <person name="Oyama R."/>
            <person name="Ravasi T."/>
            <person name="Lenhard B."/>
            <person name="Wells C."/>
            <person name="Kodzius R."/>
            <person name="Shimokawa K."/>
            <person name="Bajic V.B."/>
            <person name="Brenner S.E."/>
            <person name="Batalov S."/>
            <person name="Forrest A.R."/>
            <person name="Zavolan M."/>
            <person name="Davis M.J."/>
            <person name="Wilming L.G."/>
            <person name="Aidinis V."/>
            <person name="Allen J.E."/>
            <person name="Ambesi-Impiombato A."/>
            <person name="Apweiler R."/>
            <person name="Aturaliya R.N."/>
            <person name="Bailey T.L."/>
            <person name="Bansal M."/>
            <person name="Baxter L."/>
            <person name="Beisel K.W."/>
            <person name="Bersano T."/>
            <person name="Bono H."/>
            <person name="Chalk A.M."/>
            <person name="Chiu K.P."/>
            <person name="Choudhary V."/>
            <person name="Christoffels A."/>
            <person name="Clutterbuck D.R."/>
            <person name="Crowe M.L."/>
            <person name="Dalla E."/>
            <person name="Dalrymple B.P."/>
            <person name="de Bono B."/>
            <person name="Della Gatta G."/>
            <person name="di Bernardo D."/>
            <person name="Down T."/>
            <person name="Engstrom P."/>
            <person name="Fagiolini M."/>
            <person name="Faulkner G."/>
            <person name="Fletcher C.F."/>
            <person name="Fukushima T."/>
            <person name="Furuno M."/>
            <person name="Futaki S."/>
            <person name="Gariboldi M."/>
            <person name="Georgii-Hemming P."/>
            <person name="Gingeras T.R."/>
            <person name="Gojobori T."/>
            <person name="Green R.E."/>
            <person name="Gustincich S."/>
            <person name="Harbers M."/>
            <person name="Hayashi Y."/>
            <person name="Hensch T.K."/>
            <person name="Hirokawa N."/>
            <person name="Hill D."/>
            <person name="Huminiecki L."/>
            <person name="Iacono M."/>
            <person name="Ikeo K."/>
            <person name="Iwama A."/>
            <person name="Ishikawa T."/>
            <person name="Jakt M."/>
            <person name="Kanapin A."/>
            <person name="Katoh M."/>
            <person name="Kawasawa Y."/>
            <person name="Kelso J."/>
            <person name="Kitamura H."/>
            <person name="Kitano H."/>
            <person name="Kollias G."/>
            <person name="Krishnan S.P."/>
            <person name="Kruger A."/>
            <person name="Kummerfeld S.K."/>
            <person name="Kurochkin I.V."/>
            <person name="Lareau L.F."/>
            <person name="Lazarevic D."/>
            <person name="Lipovich L."/>
            <person name="Liu J."/>
            <person name="Liuni S."/>
            <person name="McWilliam S."/>
            <person name="Madan Babu M."/>
            <person name="Madera M."/>
            <person name="Marchionni L."/>
            <person name="Matsuda H."/>
            <person name="Matsuzawa S."/>
            <person name="Miki H."/>
            <person name="Mignone F."/>
            <person name="Miyake S."/>
            <person name="Morris K."/>
            <person name="Mottagui-Tabar S."/>
            <person name="Mulder N."/>
            <person name="Nakano N."/>
            <person name="Nakauchi H."/>
            <person name="Ng P."/>
            <person name="Nilsson R."/>
            <person name="Nishiguchi S."/>
            <person name="Nishikawa S."/>
            <person name="Nori F."/>
            <person name="Ohara O."/>
            <person name="Okazaki Y."/>
            <person name="Orlando V."/>
            <person name="Pang K.C."/>
            <person name="Pavan W.J."/>
            <person name="Pavesi G."/>
            <person name="Pesole G."/>
            <person name="Petrovsky N."/>
            <person name="Piazza S."/>
            <person name="Reed J."/>
            <person name="Reid J.F."/>
            <person name="Ring B.Z."/>
            <person name="Ringwald M."/>
            <person name="Rost B."/>
            <person name="Ruan Y."/>
            <person name="Salzberg S.L."/>
            <person name="Sandelin A."/>
            <person name="Schneider C."/>
            <person name="Schoenbach C."/>
            <person name="Sekiguchi K."/>
            <person name="Semple C.A."/>
            <person name="Seno S."/>
            <person name="Sessa L."/>
            <person name="Sheng Y."/>
            <person name="Shibata Y."/>
            <person name="Shimada H."/>
            <person name="Shimada K."/>
            <person name="Silva D."/>
            <person name="Sinclair B."/>
            <person name="Sperling S."/>
            <person name="Stupka E."/>
            <person name="Sugiura K."/>
            <person name="Sultana R."/>
            <person name="Takenaka Y."/>
            <person name="Taki K."/>
            <person name="Tammoja K."/>
            <person name="Tan S.L."/>
            <person name="Tang S."/>
            <person name="Taylor M.S."/>
            <person name="Tegner J."/>
            <person name="Teichmann S.A."/>
            <person name="Ueda H.R."/>
            <person name="van Nimwegen E."/>
            <person name="Verardo R."/>
            <person name="Wei C.L."/>
            <person name="Yagi K."/>
            <person name="Yamanishi H."/>
            <person name="Zabarovsky E."/>
            <person name="Zhu S."/>
            <person name="Zimmer A."/>
            <person name="Hide W."/>
            <person name="Bult C."/>
            <person name="Grimmond S.M."/>
            <person name="Teasdale R.D."/>
            <person name="Liu E.T."/>
            <person name="Brusic V."/>
            <person name="Quackenbush J."/>
            <person name="Wahlestedt C."/>
            <person name="Mattick J.S."/>
            <person name="Hume D.A."/>
            <person name="Kai C."/>
            <person name="Sasaki D."/>
            <person name="Tomaru Y."/>
            <person name="Fukuda S."/>
            <person name="Kanamori-Katayama M."/>
            <person name="Suzuki M."/>
            <person name="Aoki J."/>
            <person name="Arakawa T."/>
            <person name="Iida J."/>
            <person name="Imamura K."/>
            <person name="Itoh M."/>
            <person name="Kato T."/>
            <person name="Kawaji H."/>
            <person name="Kawagashira N."/>
            <person name="Kawashima T."/>
            <person name="Kojima M."/>
            <person name="Kondo S."/>
            <person name="Konno H."/>
            <person name="Nakano K."/>
            <person name="Ninomiya N."/>
            <person name="Nishio T."/>
            <person name="Okada M."/>
            <person name="Plessy C."/>
            <person name="Shibata K."/>
            <person name="Shiraki T."/>
            <person name="Suzuki S."/>
            <person name="Tagami M."/>
            <person name="Waki K."/>
            <person name="Watahiki A."/>
            <person name="Okamura-Oho Y."/>
            <person name="Suzuki H."/>
            <person name="Kawai J."/>
            <person name="Hayashizaki Y."/>
        </authorList>
    </citation>
    <scope>NUCLEOTIDE SEQUENCE [LARGE SCALE MRNA]</scope>
    <source>
        <strain evidence="11">C57BL/6J</strain>
    </source>
</reference>
<reference key="2">
    <citation type="journal article" date="2009" name="PLoS Biol.">
        <title>Lineage-specific biology revealed by a finished genome assembly of the mouse.</title>
        <authorList>
            <person name="Church D.M."/>
            <person name="Goodstadt L."/>
            <person name="Hillier L.W."/>
            <person name="Zody M.C."/>
            <person name="Goldstein S."/>
            <person name="She X."/>
            <person name="Bult C.J."/>
            <person name="Agarwala R."/>
            <person name="Cherry J.L."/>
            <person name="DiCuccio M."/>
            <person name="Hlavina W."/>
            <person name="Kapustin Y."/>
            <person name="Meric P."/>
            <person name="Maglott D."/>
            <person name="Birtle Z."/>
            <person name="Marques A.C."/>
            <person name="Graves T."/>
            <person name="Zhou S."/>
            <person name="Teague B."/>
            <person name="Potamousis K."/>
            <person name="Churas C."/>
            <person name="Place M."/>
            <person name="Herschleb J."/>
            <person name="Runnheim R."/>
            <person name="Forrest D."/>
            <person name="Amos-Landgraf J."/>
            <person name="Schwartz D.C."/>
            <person name="Cheng Z."/>
            <person name="Lindblad-Toh K."/>
            <person name="Eichler E.E."/>
            <person name="Ponting C.P."/>
        </authorList>
    </citation>
    <scope>NUCLEOTIDE SEQUENCE [LARGE SCALE GENOMIC DNA]</scope>
    <source>
        <strain>C57BL/6J</strain>
    </source>
</reference>
<reference evidence="12" key="3">
    <citation type="submission" date="2005-07" db="EMBL/GenBank/DDBJ databases">
        <authorList>
            <person name="Mural R.J."/>
            <person name="Adams M.D."/>
            <person name="Myers E.W."/>
            <person name="Smith H.O."/>
            <person name="Venter J.C."/>
        </authorList>
    </citation>
    <scope>NUCLEOTIDE SEQUENCE [LARGE SCALE GENOMIC DNA]</scope>
</reference>
<reference evidence="10" key="4">
    <citation type="journal article" date="2004" name="Genome Res.">
        <title>The status, quality, and expansion of the NIH full-length cDNA project: the Mammalian Gene Collection (MGC).</title>
        <authorList>
            <consortium name="The MGC Project Team"/>
        </authorList>
    </citation>
    <scope>NUCLEOTIDE SEQUENCE [LARGE SCALE MRNA]</scope>
    <source>
        <strain evidence="10">FVB/N</strain>
        <tissue evidence="10">Liver</tissue>
    </source>
</reference>
<reference key="5">
    <citation type="journal article" date="2003" name="J. Biol. Chem.">
        <title>Proteomic analysis of the mouse liver mitochondrial inner membrane.</title>
        <authorList>
            <person name="Da Cruz S."/>
            <person name="Xenarios I."/>
            <person name="Langridge J."/>
            <person name="Vilbois F."/>
            <person name="Parone P.A."/>
            <person name="Martinou J.-C."/>
        </authorList>
    </citation>
    <scope>SUBCELLULAR LOCATION</scope>
</reference>
<reference evidence="9" key="6">
    <citation type="journal article" date="2008" name="Mol. Cell. Neurosci.">
        <title>Mitochondrial localization and function of a subset of 22q11 deletion syndrome candidate genes.</title>
        <authorList>
            <person name="Maynard T.M."/>
            <person name="Meechan D.W."/>
            <person name="Dudevoir M.L."/>
            <person name="Gopalakrishna D."/>
            <person name="Peters A.Z."/>
            <person name="Heindel C.C."/>
            <person name="Sugimoto T.J."/>
            <person name="Wu Y."/>
            <person name="Lieberman J.A."/>
            <person name="Lamantia A.S."/>
        </authorList>
    </citation>
    <scope>SUBCELLULAR LOCATION</scope>
    <scope>TISSUE SPECIFICITY</scope>
    <scope>DEVELOPMENTAL STAGE</scope>
</reference>
<reference key="7">
    <citation type="journal article" date="2010" name="Cell">
        <title>A tissue-specific atlas of mouse protein phosphorylation and expression.</title>
        <authorList>
            <person name="Huttlin E.L."/>
            <person name="Jedrychowski M.P."/>
            <person name="Elias J.E."/>
            <person name="Goswami T."/>
            <person name="Rad R."/>
            <person name="Beausoleil S.A."/>
            <person name="Villen J."/>
            <person name="Haas W."/>
            <person name="Sowa M.E."/>
            <person name="Gygi S.P."/>
        </authorList>
    </citation>
    <scope>IDENTIFICATION BY MASS SPECTROMETRY [LARGE SCALE ANALYSIS]</scope>
    <source>
        <tissue>Brain</tissue>
        <tissue>Brown adipose tissue</tissue>
        <tissue>Heart</tissue>
        <tissue>Kidney</tissue>
        <tissue>Liver</tissue>
        <tissue>Lung</tissue>
        <tissue>Pancreas</tissue>
        <tissue>Spleen</tissue>
        <tissue>Testis</tissue>
    </source>
</reference>
<evidence type="ECO:0000250" key="1">
    <source>
        <dbReference type="UniProtKB" id="P32089"/>
    </source>
</evidence>
<evidence type="ECO:0000250" key="2">
    <source>
        <dbReference type="UniProtKB" id="P53007"/>
    </source>
</evidence>
<evidence type="ECO:0000255" key="3"/>
<evidence type="ECO:0000255" key="4">
    <source>
        <dbReference type="PROSITE-ProRule" id="PRU00282"/>
    </source>
</evidence>
<evidence type="ECO:0000255" key="5">
    <source>
        <dbReference type="RuleBase" id="RU000488"/>
    </source>
</evidence>
<evidence type="ECO:0000256" key="6">
    <source>
        <dbReference type="SAM" id="MobiDB-lite"/>
    </source>
</evidence>
<evidence type="ECO:0000269" key="7">
    <source>
    </source>
</evidence>
<evidence type="ECO:0000269" key="8">
    <source>
    </source>
</evidence>
<evidence type="ECO:0000305" key="9"/>
<evidence type="ECO:0000312" key="10">
    <source>
        <dbReference type="EMBL" id="AAH37087.1"/>
    </source>
</evidence>
<evidence type="ECO:0000312" key="11">
    <source>
        <dbReference type="EMBL" id="BAE34965.1"/>
    </source>
</evidence>
<evidence type="ECO:0000312" key="12">
    <source>
        <dbReference type="EMBL" id="EDK97495.1"/>
    </source>
</evidence>
<evidence type="ECO:0000312" key="13">
    <source>
        <dbReference type="MGI" id="MGI:1345283"/>
    </source>
</evidence>
<keyword id="KW-0050">Antiport</keyword>
<keyword id="KW-0472">Membrane</keyword>
<keyword id="KW-0496">Mitochondrion</keyword>
<keyword id="KW-0999">Mitochondrion inner membrane</keyword>
<keyword id="KW-0597">Phosphoprotein</keyword>
<keyword id="KW-1185">Reference proteome</keyword>
<keyword id="KW-0677">Repeat</keyword>
<keyword id="KW-0809">Transit peptide</keyword>
<keyword id="KW-0812">Transmembrane</keyword>
<keyword id="KW-1133">Transmembrane helix</keyword>
<keyword id="KW-0813">Transport</keyword>
<name>TXTP_MOUSE</name>
<accession>Q8JZU2</accession>
<accession>Q3TDH6</accession>
<proteinExistence type="evidence at protein level"/>
<sequence length="311" mass="33931">MAAPRGPRALSAAAPGSGKPKLTHPGKAILAGGLAGGIEICITFPTEYVKTQLQLDERANPPRYRGIGDCVRQTVRSHGVLGLYRGLSSLLYGSIPKAAVRFGMFEFLSNHMRDAQGRLDSRRGLLCGLGAGVAEAVVVVCPMETIKVKFIHDQTSSNPKYRGFFHGVREIIREQGLKGTYQGLTATVLKQGSNQAIRFFVMTSLRNWYQGDNHNKPMNPLITGVFGATAGAASVFGNTPLDVIKTRMQGLEAHKYRNTLDCGLKILKNEGPKAFYKGTVPRLGRVCLDVAIVFIIYDEVVKLLNKVWKTD</sequence>
<organism evidence="10">
    <name type="scientific">Mus musculus</name>
    <name type="common">Mouse</name>
    <dbReference type="NCBI Taxonomy" id="10090"/>
    <lineage>
        <taxon>Eukaryota</taxon>
        <taxon>Metazoa</taxon>
        <taxon>Chordata</taxon>
        <taxon>Craniata</taxon>
        <taxon>Vertebrata</taxon>
        <taxon>Euteleostomi</taxon>
        <taxon>Mammalia</taxon>
        <taxon>Eutheria</taxon>
        <taxon>Euarchontoglires</taxon>
        <taxon>Glires</taxon>
        <taxon>Rodentia</taxon>
        <taxon>Myomorpha</taxon>
        <taxon>Muroidea</taxon>
        <taxon>Muridae</taxon>
        <taxon>Murinae</taxon>
        <taxon>Mus</taxon>
        <taxon>Mus</taxon>
    </lineage>
</organism>
<gene>
    <name evidence="13" type="primary">Slc25a1</name>
</gene>
<comment type="function">
    <text evidence="2">Mitochondrial electroneutral antiporter that exports citrate from the mitochondria into the cytosol in exchange for malate. Also able to mediate the exchange of citrate for isocitrate, phosphoenolpyruvate, cis-aconitate and to a lesser extent trans-aconitate, maleate and succinate. In the cytoplasm, citrate plays important roles in fatty acid and sterol synthesis, regulation of glycolysis, protein acetylation, and other physiopathological processes.</text>
</comment>
<comment type="catalytic activity">
    <reaction evidence="2">
        <text>(S)-malate(in) + citrate(out) = (S)-malate(out) + citrate(in)</text>
        <dbReference type="Rhea" id="RHEA:72483"/>
        <dbReference type="ChEBI" id="CHEBI:15589"/>
        <dbReference type="ChEBI" id="CHEBI:16947"/>
    </reaction>
</comment>
<comment type="catalytic activity">
    <reaction evidence="2">
        <text>D-threo-isocitrate(in) + citrate(out) = D-threo-isocitrate(out) + citrate(in)</text>
        <dbReference type="Rhea" id="RHEA:72471"/>
        <dbReference type="ChEBI" id="CHEBI:15562"/>
        <dbReference type="ChEBI" id="CHEBI:16947"/>
    </reaction>
</comment>
<comment type="catalytic activity">
    <reaction evidence="2">
        <text>citrate(out) + succinate(in) = citrate(in) + succinate(out)</text>
        <dbReference type="Rhea" id="RHEA:28835"/>
        <dbReference type="ChEBI" id="CHEBI:16947"/>
        <dbReference type="ChEBI" id="CHEBI:30031"/>
    </reaction>
</comment>
<comment type="catalytic activity">
    <reaction evidence="2">
        <text>cis-aconitate(in) + citrate(out) = cis-aconitate(out) + citrate(in)</text>
        <dbReference type="Rhea" id="RHEA:72475"/>
        <dbReference type="ChEBI" id="CHEBI:16383"/>
        <dbReference type="ChEBI" id="CHEBI:16947"/>
    </reaction>
</comment>
<comment type="catalytic activity">
    <reaction evidence="2">
        <text>trans-aconitate(in) + citrate(out) = trans-aconitate(out) + citrate(in)</text>
        <dbReference type="Rhea" id="RHEA:72479"/>
        <dbReference type="ChEBI" id="CHEBI:15708"/>
        <dbReference type="ChEBI" id="CHEBI:16947"/>
    </reaction>
</comment>
<comment type="catalytic activity">
    <reaction evidence="2">
        <text>phosphoenolpyruvate(in) + citrate(out) = phosphoenolpyruvate(out) + citrate(in)</text>
        <dbReference type="Rhea" id="RHEA:72487"/>
        <dbReference type="ChEBI" id="CHEBI:16947"/>
        <dbReference type="ChEBI" id="CHEBI:58702"/>
    </reaction>
</comment>
<comment type="catalytic activity">
    <reaction evidence="2">
        <text>maleate(in) + citrate(out) = maleate(out) + citrate(in)</text>
        <dbReference type="Rhea" id="RHEA:72491"/>
        <dbReference type="ChEBI" id="CHEBI:16947"/>
        <dbReference type="ChEBI" id="CHEBI:30780"/>
    </reaction>
</comment>
<comment type="subcellular location">
    <subcellularLocation>
        <location evidence="7">Mitochondrion inner membrane</location>
        <topology evidence="3">Multi-pass membrane protein</topology>
    </subcellularLocation>
    <subcellularLocation>
        <location evidence="8">Mitochondrion membrane</location>
        <topology evidence="3">Multi-pass membrane protein</topology>
    </subcellularLocation>
</comment>
<comment type="tissue specificity">
    <text evidence="8">Expressed minimally but ubiquitously throughout the adult brain. Detected at higher levels in the olfactory bulb, neocortex and cerebellum. Also expressed in a subset of large cells in the globus pallidus.</text>
</comment>
<comment type="developmental stage">
    <text evidence="8">Expression reaches a maximum between 16 dpc and P0 and then declines in adulthood.</text>
</comment>
<comment type="PTM">
    <text evidence="1">Possesses a short cleavable presequence, which, however, is found to be dispensable both for targeting to mitochondria and insertion into the inner membrane. However, the presequence is required to keep SLC25A1 in a soluble state and thus in an import-competent state. Mature SLC25A1 lacking the presequence is prone to aggregation.</text>
</comment>
<comment type="similarity">
    <text evidence="5">Belongs to the mitochondrial carrier (TC 2.A.29) family.</text>
</comment>
<protein>
    <recommendedName>
        <fullName evidence="2">Tricarboxylate transport protein, mitochondrial</fullName>
    </recommendedName>
    <alternativeName>
        <fullName evidence="2">Citrate transport protein</fullName>
        <shortName evidence="2">CTP</shortName>
    </alternativeName>
    <alternativeName>
        <fullName evidence="13">Solute carrier family 25 member 1</fullName>
    </alternativeName>
    <alternativeName>
        <fullName evidence="2">Tricarboxylate carrier protein</fullName>
    </alternativeName>
</protein>
<feature type="propeptide" id="PRO_0000456576" description="Removed in mature form" evidence="1">
    <location>
        <begin position="1"/>
        <end position="13"/>
    </location>
</feature>
<feature type="chain" id="PRO_0000430571" description="Tricarboxylate transport protein, mitochondrial">
    <location>
        <begin position="14"/>
        <end position="311"/>
    </location>
</feature>
<feature type="transmembrane region" description="Helical; Name=1" evidence="3">
    <location>
        <begin position="29"/>
        <end position="46"/>
    </location>
</feature>
<feature type="transmembrane region" description="Helical; Name=2" evidence="3">
    <location>
        <begin position="86"/>
        <end position="105"/>
    </location>
</feature>
<feature type="transmembrane region" description="Helical; Name=3" evidence="3">
    <location>
        <begin position="129"/>
        <end position="143"/>
    </location>
</feature>
<feature type="transmembrane region" description="Helical; Name=4" evidence="3">
    <location>
        <begin position="183"/>
        <end position="202"/>
    </location>
</feature>
<feature type="transmembrane region" description="Helical; Name=5" evidence="3">
    <location>
        <begin position="224"/>
        <end position="241"/>
    </location>
</feature>
<feature type="transmembrane region" description="Helical; Name=6" evidence="3">
    <location>
        <begin position="278"/>
        <end position="297"/>
    </location>
</feature>
<feature type="repeat" description="Solcar 1" evidence="4">
    <location>
        <begin position="23"/>
        <end position="111"/>
    </location>
</feature>
<feature type="repeat" description="Solcar 2" evidence="4">
    <location>
        <begin position="122"/>
        <end position="208"/>
    </location>
</feature>
<feature type="repeat" description="Solcar 3" evidence="4">
    <location>
        <begin position="218"/>
        <end position="303"/>
    </location>
</feature>
<feature type="region of interest" description="Disordered" evidence="6">
    <location>
        <begin position="1"/>
        <end position="21"/>
    </location>
</feature>
<feature type="modified residue" description="Phosphoserine" evidence="2">
    <location>
        <position position="156"/>
    </location>
</feature>
<feature type="sequence conflict" description="In Ref. 1; BAE41625." evidence="9" ref="1">
    <original>H</original>
    <variation>Y</variation>
    <location>
        <position position="78"/>
    </location>
</feature>
<feature type="sequence conflict" description="In Ref. 1; BAE41625." evidence="9" ref="1">
    <original>A</original>
    <variation>D</variation>
    <location>
        <position position="115"/>
    </location>
</feature>